<accession>O14087</accession>
<name>RIM1_SCHPO</name>
<evidence type="ECO:0000250" key="1"/>
<evidence type="ECO:0000255" key="2"/>
<evidence type="ECO:0000255" key="3">
    <source>
        <dbReference type="PROSITE-ProRule" id="PRU00252"/>
    </source>
</evidence>
<evidence type="ECO:0000256" key="4">
    <source>
        <dbReference type="SAM" id="MobiDB-lite"/>
    </source>
</evidence>
<keyword id="KW-0235">DNA replication</keyword>
<keyword id="KW-0238">DNA-binding</keyword>
<keyword id="KW-0496">Mitochondrion</keyword>
<keyword id="KW-1185">Reference proteome</keyword>
<keyword id="KW-0809">Transit peptide</keyword>
<proteinExistence type="evidence at transcript level"/>
<gene>
    <name type="primary">rim1</name>
    <name type="ORF">SPAC2F3.04c</name>
</gene>
<organism>
    <name type="scientific">Schizosaccharomyces pombe (strain 972 / ATCC 24843)</name>
    <name type="common">Fission yeast</name>
    <dbReference type="NCBI Taxonomy" id="284812"/>
    <lineage>
        <taxon>Eukaryota</taxon>
        <taxon>Fungi</taxon>
        <taxon>Dikarya</taxon>
        <taxon>Ascomycota</taxon>
        <taxon>Taphrinomycotina</taxon>
        <taxon>Schizosaccharomycetes</taxon>
        <taxon>Schizosaccharomycetales</taxon>
        <taxon>Schizosaccharomycetaceae</taxon>
        <taxon>Schizosaccharomyces</taxon>
    </lineage>
</organism>
<protein>
    <recommendedName>
        <fullName>Single-stranded DNA-binding protein rim1, mitochondrial</fullName>
    </recommendedName>
    <alternativeName>
        <fullName>Mitochondrial ssDNA-binding protein</fullName>
    </alternativeName>
</protein>
<dbReference type="EMBL" id="AB191155">
    <property type="protein sequence ID" value="BAD93308.1"/>
    <property type="molecule type" value="mRNA"/>
</dbReference>
<dbReference type="EMBL" id="CU329670">
    <property type="protein sequence ID" value="CAB16271.2"/>
    <property type="molecule type" value="Genomic_DNA"/>
</dbReference>
<dbReference type="PIR" id="T38537">
    <property type="entry name" value="T38537"/>
</dbReference>
<dbReference type="RefSeq" id="NP_594383.1">
    <property type="nucleotide sequence ID" value="NM_001019804.2"/>
</dbReference>
<dbReference type="SMR" id="O14087"/>
<dbReference type="BioGRID" id="278421">
    <property type="interactions" value="6"/>
</dbReference>
<dbReference type="FunCoup" id="O14087">
    <property type="interactions" value="36"/>
</dbReference>
<dbReference type="STRING" id="284812.O14087"/>
<dbReference type="iPTMnet" id="O14087"/>
<dbReference type="PaxDb" id="4896-SPAC2F3.04c.1"/>
<dbReference type="EnsemblFungi" id="SPAC2F3.04c.1">
    <property type="protein sequence ID" value="SPAC2F3.04c.1:pep"/>
    <property type="gene ID" value="SPAC2F3.04c"/>
</dbReference>
<dbReference type="GeneID" id="2541933"/>
<dbReference type="KEGG" id="spo:2541933"/>
<dbReference type="PomBase" id="SPAC2F3.04c">
    <property type="gene designation" value="rim1"/>
</dbReference>
<dbReference type="VEuPathDB" id="FungiDB:SPAC2F3.04c"/>
<dbReference type="eggNOG" id="ENOG502SCM0">
    <property type="taxonomic scope" value="Eukaryota"/>
</dbReference>
<dbReference type="HOGENOM" id="CLU_1732542_0_0_1"/>
<dbReference type="InParanoid" id="O14087"/>
<dbReference type="PhylomeDB" id="O14087"/>
<dbReference type="Reactome" id="R-SPO-9837999">
    <property type="pathway name" value="Mitochondrial protein degradation"/>
</dbReference>
<dbReference type="PRO" id="PR:O14087"/>
<dbReference type="Proteomes" id="UP000002485">
    <property type="component" value="Chromosome I"/>
</dbReference>
<dbReference type="GO" id="GO:0042645">
    <property type="term" value="C:mitochondrial nucleoid"/>
    <property type="evidence" value="ECO:0000318"/>
    <property type="project" value="GO_Central"/>
</dbReference>
<dbReference type="GO" id="GO:0005739">
    <property type="term" value="C:mitochondrion"/>
    <property type="evidence" value="ECO:0007005"/>
    <property type="project" value="PomBase"/>
</dbReference>
<dbReference type="GO" id="GO:0008047">
    <property type="term" value="F:enzyme activator activity"/>
    <property type="evidence" value="ECO:0000318"/>
    <property type="project" value="GO_Central"/>
</dbReference>
<dbReference type="GO" id="GO:0003697">
    <property type="term" value="F:single-stranded DNA binding"/>
    <property type="evidence" value="ECO:0000314"/>
    <property type="project" value="PomBase"/>
</dbReference>
<dbReference type="GO" id="GO:0006260">
    <property type="term" value="P:DNA replication"/>
    <property type="evidence" value="ECO:0000318"/>
    <property type="project" value="GO_Central"/>
</dbReference>
<dbReference type="GO" id="GO:0000002">
    <property type="term" value="P:mitochondrial genome maintenance"/>
    <property type="evidence" value="ECO:0000318"/>
    <property type="project" value="GO_Central"/>
</dbReference>
<dbReference type="GO" id="GO:0090297">
    <property type="term" value="P:positive regulation of mitochondrial DNA replication"/>
    <property type="evidence" value="ECO:0000318"/>
    <property type="project" value="GO_Central"/>
</dbReference>
<dbReference type="CDD" id="cd04496">
    <property type="entry name" value="SSB_OBF"/>
    <property type="match status" value="1"/>
</dbReference>
<dbReference type="Gene3D" id="2.40.50.140">
    <property type="entry name" value="Nucleic acid-binding proteins"/>
    <property type="match status" value="1"/>
</dbReference>
<dbReference type="InterPro" id="IPR012340">
    <property type="entry name" value="NA-bd_OB-fold"/>
</dbReference>
<dbReference type="InterPro" id="IPR000424">
    <property type="entry name" value="Primosome_PriB/ssb"/>
</dbReference>
<dbReference type="Pfam" id="PF00436">
    <property type="entry name" value="SSB"/>
    <property type="match status" value="1"/>
</dbReference>
<dbReference type="SUPFAM" id="SSF50249">
    <property type="entry name" value="Nucleic acid-binding proteins"/>
    <property type="match status" value="1"/>
</dbReference>
<dbReference type="PROSITE" id="PS50935">
    <property type="entry name" value="SSB"/>
    <property type="match status" value="1"/>
</dbReference>
<reference key="1">
    <citation type="submission" date="2004-09" db="EMBL/GenBank/DDBJ databases">
        <title>Isolation and characterization of the Schizosaccharomyces pombe cDNA encoding mitochondrial single-stranded DNA binding protein, rim1.</title>
        <authorList>
            <person name="Nishio M."/>
            <person name="Ikeda S."/>
        </authorList>
    </citation>
    <scope>NUCLEOTIDE SEQUENCE [MRNA]</scope>
</reference>
<reference key="2">
    <citation type="journal article" date="2002" name="Nature">
        <title>The genome sequence of Schizosaccharomyces pombe.</title>
        <authorList>
            <person name="Wood V."/>
            <person name="Gwilliam R."/>
            <person name="Rajandream M.A."/>
            <person name="Lyne M.H."/>
            <person name="Lyne R."/>
            <person name="Stewart A."/>
            <person name="Sgouros J.G."/>
            <person name="Peat N."/>
            <person name="Hayles J."/>
            <person name="Baker S.G."/>
            <person name="Basham D."/>
            <person name="Bowman S."/>
            <person name="Brooks K."/>
            <person name="Brown D."/>
            <person name="Brown S."/>
            <person name="Chillingworth T."/>
            <person name="Churcher C.M."/>
            <person name="Collins M."/>
            <person name="Connor R."/>
            <person name="Cronin A."/>
            <person name="Davis P."/>
            <person name="Feltwell T."/>
            <person name="Fraser A."/>
            <person name="Gentles S."/>
            <person name="Goble A."/>
            <person name="Hamlin N."/>
            <person name="Harris D.E."/>
            <person name="Hidalgo J."/>
            <person name="Hodgson G."/>
            <person name="Holroyd S."/>
            <person name="Hornsby T."/>
            <person name="Howarth S."/>
            <person name="Huckle E.J."/>
            <person name="Hunt S."/>
            <person name="Jagels K."/>
            <person name="James K.D."/>
            <person name="Jones L."/>
            <person name="Jones M."/>
            <person name="Leather S."/>
            <person name="McDonald S."/>
            <person name="McLean J."/>
            <person name="Mooney P."/>
            <person name="Moule S."/>
            <person name="Mungall K.L."/>
            <person name="Murphy L.D."/>
            <person name="Niblett D."/>
            <person name="Odell C."/>
            <person name="Oliver K."/>
            <person name="O'Neil S."/>
            <person name="Pearson D."/>
            <person name="Quail M.A."/>
            <person name="Rabbinowitsch E."/>
            <person name="Rutherford K.M."/>
            <person name="Rutter S."/>
            <person name="Saunders D."/>
            <person name="Seeger K."/>
            <person name="Sharp S."/>
            <person name="Skelton J."/>
            <person name="Simmonds M.N."/>
            <person name="Squares R."/>
            <person name="Squares S."/>
            <person name="Stevens K."/>
            <person name="Taylor K."/>
            <person name="Taylor R.G."/>
            <person name="Tivey A."/>
            <person name="Walsh S.V."/>
            <person name="Warren T."/>
            <person name="Whitehead S."/>
            <person name="Woodward J.R."/>
            <person name="Volckaert G."/>
            <person name="Aert R."/>
            <person name="Robben J."/>
            <person name="Grymonprez B."/>
            <person name="Weltjens I."/>
            <person name="Vanstreels E."/>
            <person name="Rieger M."/>
            <person name="Schaefer M."/>
            <person name="Mueller-Auer S."/>
            <person name="Gabel C."/>
            <person name="Fuchs M."/>
            <person name="Duesterhoeft A."/>
            <person name="Fritzc C."/>
            <person name="Holzer E."/>
            <person name="Moestl D."/>
            <person name="Hilbert H."/>
            <person name="Borzym K."/>
            <person name="Langer I."/>
            <person name="Beck A."/>
            <person name="Lehrach H."/>
            <person name="Reinhardt R."/>
            <person name="Pohl T.M."/>
            <person name="Eger P."/>
            <person name="Zimmermann W."/>
            <person name="Wedler H."/>
            <person name="Wambutt R."/>
            <person name="Purnelle B."/>
            <person name="Goffeau A."/>
            <person name="Cadieu E."/>
            <person name="Dreano S."/>
            <person name="Gloux S."/>
            <person name="Lelaure V."/>
            <person name="Mottier S."/>
            <person name="Galibert F."/>
            <person name="Aves S.J."/>
            <person name="Xiang Z."/>
            <person name="Hunt C."/>
            <person name="Moore K."/>
            <person name="Hurst S.M."/>
            <person name="Lucas M."/>
            <person name="Rochet M."/>
            <person name="Gaillardin C."/>
            <person name="Tallada V.A."/>
            <person name="Garzon A."/>
            <person name="Thode G."/>
            <person name="Daga R.R."/>
            <person name="Cruzado L."/>
            <person name="Jimenez J."/>
            <person name="Sanchez M."/>
            <person name="del Rey F."/>
            <person name="Benito J."/>
            <person name="Dominguez A."/>
            <person name="Revuelta J.L."/>
            <person name="Moreno S."/>
            <person name="Armstrong J."/>
            <person name="Forsburg S.L."/>
            <person name="Cerutti L."/>
            <person name="Lowe T."/>
            <person name="McCombie W.R."/>
            <person name="Paulsen I."/>
            <person name="Potashkin J."/>
            <person name="Shpakovski G.V."/>
            <person name="Ussery D."/>
            <person name="Barrell B.G."/>
            <person name="Nurse P."/>
        </authorList>
    </citation>
    <scope>NUCLEOTIDE SEQUENCE [LARGE SCALE GENOMIC DNA]</scope>
    <source>
        <strain>972 / ATCC 24843</strain>
    </source>
</reference>
<comment type="function">
    <text evidence="1">This protein binds preferentially and cooperatively to ss-DNA. Involved in mitochondrial DNA replication (By similarity).</text>
</comment>
<comment type="subcellular location">
    <subcellularLocation>
        <location evidence="1">Mitochondrion</location>
    </subcellularLocation>
</comment>
<feature type="transit peptide" description="Mitochondrion" evidence="2">
    <location>
        <begin position="1"/>
        <end position="22"/>
    </location>
</feature>
<feature type="chain" id="PRO_0000223929" description="Single-stranded DNA-binding protein rim1, mitochondrial">
    <location>
        <begin position="23"/>
        <end position="150"/>
    </location>
</feature>
<feature type="domain" description="SSB" evidence="3">
    <location>
        <begin position="25"/>
        <end position="125"/>
    </location>
</feature>
<feature type="region of interest" description="Disordered" evidence="4">
    <location>
        <begin position="127"/>
        <end position="150"/>
    </location>
</feature>
<feature type="compositionally biased region" description="Basic and acidic residues" evidence="4">
    <location>
        <begin position="128"/>
        <end position="141"/>
    </location>
</feature>
<sequence length="150" mass="17139">MLFLKSSRAFSKRLFSSSTVRYRDIQRLTLTGNLTKDVERLQSQKGNEYMRYTVASNNGKDVAPTFHSVYVFDSYNFDRLQTILRKGTRVYVEADAVWRSVPAGNEGSQAKMSLRHVSADVLFYPRNKNGDESGEETHPELDADPMINSF</sequence>